<accession>B4RYE3</accession>
<accession>F2GC05</accession>
<proteinExistence type="inferred from homology"/>
<dbReference type="EMBL" id="CP001103">
    <property type="protein sequence ID" value="AEA98021.1"/>
    <property type="molecule type" value="Genomic_DNA"/>
</dbReference>
<dbReference type="RefSeq" id="WP_012518347.1">
    <property type="nucleotide sequence ID" value="NC_011138.3"/>
</dbReference>
<dbReference type="SMR" id="B4RYE3"/>
<dbReference type="KEGG" id="amc:MADE_1009415"/>
<dbReference type="HOGENOM" id="CLU_155659_3_1_6"/>
<dbReference type="Proteomes" id="UP000001870">
    <property type="component" value="Chromosome"/>
</dbReference>
<dbReference type="GO" id="GO:0005829">
    <property type="term" value="C:cytosol"/>
    <property type="evidence" value="ECO:0007669"/>
    <property type="project" value="TreeGrafter"/>
</dbReference>
<dbReference type="FunFam" id="2.20.25.10:FF:000002">
    <property type="entry name" value="UPF0434 protein YcaR"/>
    <property type="match status" value="1"/>
</dbReference>
<dbReference type="Gene3D" id="2.20.25.10">
    <property type="match status" value="1"/>
</dbReference>
<dbReference type="HAMAP" id="MF_01187">
    <property type="entry name" value="UPF0434"/>
    <property type="match status" value="1"/>
</dbReference>
<dbReference type="InterPro" id="IPR005651">
    <property type="entry name" value="Trm112-like"/>
</dbReference>
<dbReference type="PANTHER" id="PTHR33505:SF4">
    <property type="entry name" value="PROTEIN PREY, MITOCHONDRIAL"/>
    <property type="match status" value="1"/>
</dbReference>
<dbReference type="PANTHER" id="PTHR33505">
    <property type="entry name" value="ZGC:162634"/>
    <property type="match status" value="1"/>
</dbReference>
<dbReference type="Pfam" id="PF03966">
    <property type="entry name" value="Trm112p"/>
    <property type="match status" value="1"/>
</dbReference>
<dbReference type="SUPFAM" id="SSF158997">
    <property type="entry name" value="Trm112p-like"/>
    <property type="match status" value="1"/>
</dbReference>
<protein>
    <recommendedName>
        <fullName evidence="1">UPF0434 protein MADE_1009415</fullName>
    </recommendedName>
</protein>
<comment type="similarity">
    <text evidence="1">Belongs to the UPF0434 family.</text>
</comment>
<feature type="chain" id="PRO_1000138286" description="UPF0434 protein MADE_1009415">
    <location>
        <begin position="1"/>
        <end position="64"/>
    </location>
</feature>
<evidence type="ECO:0000255" key="1">
    <source>
        <dbReference type="HAMAP-Rule" id="MF_01187"/>
    </source>
</evidence>
<name>Y1858_ALTMD</name>
<sequence>MAFDKKLLEVLACPVCKGKLVLNEDMTQLVCRFDRLAFDIKDGIPVLIESKATALSLDEVDATR</sequence>
<organism>
    <name type="scientific">Alteromonas mediterranea (strain DSM 17117 / CIP 110805 / LMG 28347 / Deep ecotype)</name>
    <dbReference type="NCBI Taxonomy" id="1774373"/>
    <lineage>
        <taxon>Bacteria</taxon>
        <taxon>Pseudomonadati</taxon>
        <taxon>Pseudomonadota</taxon>
        <taxon>Gammaproteobacteria</taxon>
        <taxon>Alteromonadales</taxon>
        <taxon>Alteromonadaceae</taxon>
        <taxon>Alteromonas/Salinimonas group</taxon>
        <taxon>Alteromonas</taxon>
    </lineage>
</organism>
<reference key="1">
    <citation type="journal article" date="2008" name="ISME J.">
        <title>Comparative genomics of two ecotypes of the marine planktonic copiotroph Alteromonas macleodii suggests alternative lifestyles associated with different kinds of particulate organic matter.</title>
        <authorList>
            <person name="Ivars-Martinez E."/>
            <person name="Martin-Cuadrado A.-B."/>
            <person name="D'Auria G."/>
            <person name="Mira A."/>
            <person name="Ferriera S."/>
            <person name="Johnson J."/>
            <person name="Friedman R."/>
            <person name="Rodriguez-Valera F."/>
        </authorList>
    </citation>
    <scope>NUCLEOTIDE SEQUENCE [LARGE SCALE GENOMIC DNA]</scope>
    <source>
        <strain>DSM 17117 / CIP 110805 / LMG 28347 / Deep ecotype</strain>
    </source>
</reference>
<gene>
    <name type="ordered locus">MADE_1009415</name>
</gene>